<comment type="catalytic activity">
    <reaction evidence="1">
        <text>L-aspartate + NH4(+) + ATP = L-asparagine + AMP + diphosphate + H(+)</text>
        <dbReference type="Rhea" id="RHEA:11372"/>
        <dbReference type="ChEBI" id="CHEBI:15378"/>
        <dbReference type="ChEBI" id="CHEBI:28938"/>
        <dbReference type="ChEBI" id="CHEBI:29991"/>
        <dbReference type="ChEBI" id="CHEBI:30616"/>
        <dbReference type="ChEBI" id="CHEBI:33019"/>
        <dbReference type="ChEBI" id="CHEBI:58048"/>
        <dbReference type="ChEBI" id="CHEBI:456215"/>
        <dbReference type="EC" id="6.3.1.1"/>
    </reaction>
</comment>
<comment type="pathway">
    <text evidence="1">Amino-acid biosynthesis; L-asparagine biosynthesis; L-asparagine from L-aspartate (ammonia route): step 1/1.</text>
</comment>
<comment type="subcellular location">
    <subcellularLocation>
        <location evidence="1">Cytoplasm</location>
    </subcellularLocation>
</comment>
<comment type="similarity">
    <text evidence="1">Belongs to the class-II aminoacyl-tRNA synthetase family. AsnA subfamily.</text>
</comment>
<organism>
    <name type="scientific">Streptococcus pyogenes serotype M3 (strain SSI-1)</name>
    <dbReference type="NCBI Taxonomy" id="193567"/>
    <lineage>
        <taxon>Bacteria</taxon>
        <taxon>Bacillati</taxon>
        <taxon>Bacillota</taxon>
        <taxon>Bacilli</taxon>
        <taxon>Lactobacillales</taxon>
        <taxon>Streptococcaceae</taxon>
        <taxon>Streptococcus</taxon>
    </lineage>
</organism>
<accession>P0CZ85</accession>
<accession>P63625</accession>
<accession>Q8P055</accession>
<dbReference type="EC" id="6.3.1.1" evidence="1"/>
<dbReference type="EMBL" id="BA000034">
    <property type="protein sequence ID" value="BAC63767.1"/>
    <property type="molecule type" value="Genomic_DNA"/>
</dbReference>
<dbReference type="RefSeq" id="WP_002983817.1">
    <property type="nucleotide sequence ID" value="NC_004606.1"/>
</dbReference>
<dbReference type="SMR" id="P0CZ85"/>
<dbReference type="KEGG" id="sps:SPs0672"/>
<dbReference type="HOGENOM" id="CLU_071543_0_0_9"/>
<dbReference type="UniPathway" id="UPA00134">
    <property type="reaction ID" value="UER00194"/>
</dbReference>
<dbReference type="GO" id="GO:0005829">
    <property type="term" value="C:cytosol"/>
    <property type="evidence" value="ECO:0007669"/>
    <property type="project" value="TreeGrafter"/>
</dbReference>
<dbReference type="GO" id="GO:0004071">
    <property type="term" value="F:aspartate-ammonia ligase activity"/>
    <property type="evidence" value="ECO:0007669"/>
    <property type="project" value="UniProtKB-UniRule"/>
</dbReference>
<dbReference type="GO" id="GO:0005524">
    <property type="term" value="F:ATP binding"/>
    <property type="evidence" value="ECO:0007669"/>
    <property type="project" value="UniProtKB-UniRule"/>
</dbReference>
<dbReference type="GO" id="GO:0140096">
    <property type="term" value="F:catalytic activity, acting on a protein"/>
    <property type="evidence" value="ECO:0007669"/>
    <property type="project" value="UniProtKB-ARBA"/>
</dbReference>
<dbReference type="GO" id="GO:0016740">
    <property type="term" value="F:transferase activity"/>
    <property type="evidence" value="ECO:0007669"/>
    <property type="project" value="UniProtKB-ARBA"/>
</dbReference>
<dbReference type="GO" id="GO:0070981">
    <property type="term" value="P:L-asparagine biosynthetic process"/>
    <property type="evidence" value="ECO:0007669"/>
    <property type="project" value="UniProtKB-UniRule"/>
</dbReference>
<dbReference type="CDD" id="cd00645">
    <property type="entry name" value="AsnA"/>
    <property type="match status" value="1"/>
</dbReference>
<dbReference type="Gene3D" id="3.30.930.10">
    <property type="entry name" value="Bira Bifunctional Protein, Domain 2"/>
    <property type="match status" value="1"/>
</dbReference>
<dbReference type="HAMAP" id="MF_00555">
    <property type="entry name" value="AsnA"/>
    <property type="match status" value="1"/>
</dbReference>
<dbReference type="InterPro" id="IPR006195">
    <property type="entry name" value="aa-tRNA-synth_II"/>
</dbReference>
<dbReference type="InterPro" id="IPR045864">
    <property type="entry name" value="aa-tRNA-synth_II/BPL/LPL"/>
</dbReference>
<dbReference type="InterPro" id="IPR004618">
    <property type="entry name" value="AsnA"/>
</dbReference>
<dbReference type="NCBIfam" id="TIGR00669">
    <property type="entry name" value="asnA"/>
    <property type="match status" value="1"/>
</dbReference>
<dbReference type="PANTHER" id="PTHR30073">
    <property type="entry name" value="ASPARTATE--AMMONIA LIGASE"/>
    <property type="match status" value="1"/>
</dbReference>
<dbReference type="PANTHER" id="PTHR30073:SF5">
    <property type="entry name" value="ASPARTATE--AMMONIA LIGASE"/>
    <property type="match status" value="1"/>
</dbReference>
<dbReference type="Pfam" id="PF03590">
    <property type="entry name" value="AsnA"/>
    <property type="match status" value="1"/>
</dbReference>
<dbReference type="PIRSF" id="PIRSF001555">
    <property type="entry name" value="Asp_ammon_ligase"/>
    <property type="match status" value="1"/>
</dbReference>
<dbReference type="SUPFAM" id="SSF55681">
    <property type="entry name" value="Class II aaRS and biotin synthetases"/>
    <property type="match status" value="1"/>
</dbReference>
<dbReference type="PROSITE" id="PS50862">
    <property type="entry name" value="AA_TRNA_LIGASE_II"/>
    <property type="match status" value="1"/>
</dbReference>
<name>ASNA_STRPQ</name>
<proteinExistence type="inferred from homology"/>
<feature type="chain" id="PRO_0000411280" description="Aspartate--ammonia ligase">
    <location>
        <begin position="1"/>
        <end position="330"/>
    </location>
</feature>
<evidence type="ECO:0000255" key="1">
    <source>
        <dbReference type="HAMAP-Rule" id="MF_00555"/>
    </source>
</evidence>
<gene>
    <name evidence="1" type="primary">asnA</name>
    <name type="ordered locus">SPs0672</name>
</gene>
<protein>
    <recommendedName>
        <fullName evidence="1">Aspartate--ammonia ligase</fullName>
        <ecNumber evidence="1">6.3.1.1</ecNumber>
    </recommendedName>
    <alternativeName>
        <fullName evidence="1">Asparagine synthetase A</fullName>
    </alternativeName>
</protein>
<keyword id="KW-0028">Amino-acid biosynthesis</keyword>
<keyword id="KW-0061">Asparagine biosynthesis</keyword>
<keyword id="KW-0067">ATP-binding</keyword>
<keyword id="KW-0963">Cytoplasm</keyword>
<keyword id="KW-0436">Ligase</keyword>
<keyword id="KW-0547">Nucleotide-binding</keyword>
<sequence>MKKSFIHQQEEISFVKNTFTQYLIAKLDVVEVQGPILSRVGDGMQDNLSGTENPVSVNVLKIPNATFEVVHSLAKWKRHTLARFGFNEGEGLVVNMKALRPDEDSLDQTHSVYVDQWDWEKVIPDGKRNLAYLKETVETIYKVIRLTELAVEARYDIEAVLPKKITFIHTEELVAKYPDLTPKERENAITKEFGAVFLIGIGGVLPDGKPHDGRAPDYDDWTTETENGYHGLNGDILVWNDQLGSAFELSSMGIRVDEEALKRQVEMTGDQDRLAFDWHKSLLNGLFPLTIGGGIGQSRMVMFLLRKKHIGEVQTSVWPQEVRDSYDNIL</sequence>
<reference key="1">
    <citation type="journal article" date="2003" name="Genome Res.">
        <title>Genome sequence of an M3 strain of Streptococcus pyogenes reveals a large-scale genomic rearrangement in invasive strains and new insights into phage evolution.</title>
        <authorList>
            <person name="Nakagawa I."/>
            <person name="Kurokawa K."/>
            <person name="Yamashita A."/>
            <person name="Nakata M."/>
            <person name="Tomiyasu Y."/>
            <person name="Okahashi N."/>
            <person name="Kawabata S."/>
            <person name="Yamazaki K."/>
            <person name="Shiba T."/>
            <person name="Yasunaga T."/>
            <person name="Hayashi H."/>
            <person name="Hattori M."/>
            <person name="Hamada S."/>
        </authorList>
    </citation>
    <scope>NUCLEOTIDE SEQUENCE [LARGE SCALE GENOMIC DNA]</scope>
    <source>
        <strain>SSI-1</strain>
    </source>
</reference>